<sequence length="456" mass="50326">MGQTLFDKVWNRHVLYGKLGEPQLLYIDLHLIHEVTSPQAFEGLRLQNRKLRRPDLTFATLDHNVPTIDIFNIKDEIANKQITTLQKNAIDFGVHIFDMGSDEQGIVHMVGPETGLTQPGKTIVCGDSHTATHGAFGAIAFGIGTSEVEHVFATQTLWQTKPKNLKIDINGTLPTGVYAKDIILHLIKTYGVDFGTGYALEFTGETIKNLSMDGRMTICNMAIEGGAKYGIIQPDDITFEYVKGRPFADNFAKSVDKWRELYSDDDAIFDRVIELDVSTLEPQVTWGTNPEMGVNFSEPFPEINDINDQRAYDYMGLEPGQKAEDIDLGYVFLGSCTNARLSDLIEASHIVKGNKVHPNITAIVVPGSRTVKKEAEKLGLDTIFKNAGFEWREPGCSMCLGMNPDQVPEGVHCASTSNRNFEGRQGKGARTHLVSPAMAAAAAIHGKFVDVRKVVV</sequence>
<proteinExistence type="inferred from homology"/>
<protein>
    <recommendedName>
        <fullName evidence="1">3-isopropylmalate dehydratase large subunit</fullName>
        <ecNumber evidence="1">4.2.1.33</ecNumber>
    </recommendedName>
    <alternativeName>
        <fullName evidence="1">Alpha-IPM isomerase</fullName>
        <shortName evidence="1">IPMI</shortName>
    </alternativeName>
    <alternativeName>
        <fullName evidence="1">Isopropylmalate isomerase</fullName>
    </alternativeName>
</protein>
<comment type="function">
    <text evidence="1">Catalyzes the isomerization between 2-isopropylmalate and 3-isopropylmalate, via the formation of 2-isopropylmaleate.</text>
</comment>
<comment type="catalytic activity">
    <reaction evidence="1">
        <text>(2R,3S)-3-isopropylmalate = (2S)-2-isopropylmalate</text>
        <dbReference type="Rhea" id="RHEA:32287"/>
        <dbReference type="ChEBI" id="CHEBI:1178"/>
        <dbReference type="ChEBI" id="CHEBI:35121"/>
        <dbReference type="EC" id="4.2.1.33"/>
    </reaction>
</comment>
<comment type="cofactor">
    <cofactor evidence="1">
        <name>[4Fe-4S] cluster</name>
        <dbReference type="ChEBI" id="CHEBI:49883"/>
    </cofactor>
    <text evidence="1">Binds 1 [4Fe-4S] cluster per subunit.</text>
</comment>
<comment type="pathway">
    <text evidence="1">Amino-acid biosynthesis; L-leucine biosynthesis; L-leucine from 3-methyl-2-oxobutanoate: step 2/4.</text>
</comment>
<comment type="subunit">
    <text evidence="1">Heterodimer of LeuC and LeuD.</text>
</comment>
<comment type="similarity">
    <text evidence="1">Belongs to the aconitase/IPM isomerase family. LeuC type 1 subfamily.</text>
</comment>
<evidence type="ECO:0000255" key="1">
    <source>
        <dbReference type="HAMAP-Rule" id="MF_01026"/>
    </source>
</evidence>
<feature type="chain" id="PRO_1000063617" description="3-isopropylmalate dehydratase large subunit">
    <location>
        <begin position="1"/>
        <end position="456"/>
    </location>
</feature>
<feature type="binding site" evidence="1">
    <location>
        <position position="336"/>
    </location>
    <ligand>
        <name>[4Fe-4S] cluster</name>
        <dbReference type="ChEBI" id="CHEBI:49883"/>
    </ligand>
</feature>
<feature type="binding site" evidence="1">
    <location>
        <position position="396"/>
    </location>
    <ligand>
        <name>[4Fe-4S] cluster</name>
        <dbReference type="ChEBI" id="CHEBI:49883"/>
    </ligand>
</feature>
<feature type="binding site" evidence="1">
    <location>
        <position position="399"/>
    </location>
    <ligand>
        <name>[4Fe-4S] cluster</name>
        <dbReference type="ChEBI" id="CHEBI:49883"/>
    </ligand>
</feature>
<gene>
    <name evidence="1" type="primary">leuC</name>
    <name type="ordered locus">SAOUHSC_02287</name>
</gene>
<reference key="1">
    <citation type="book" date="2006" name="Gram positive pathogens, 2nd edition">
        <title>The Staphylococcus aureus NCTC 8325 genome.</title>
        <editorList>
            <person name="Fischetti V."/>
            <person name="Novick R."/>
            <person name="Ferretti J."/>
            <person name="Portnoy D."/>
            <person name="Rood J."/>
        </editorList>
        <authorList>
            <person name="Gillaspy A.F."/>
            <person name="Worrell V."/>
            <person name="Orvis J."/>
            <person name="Roe B.A."/>
            <person name="Dyer D.W."/>
            <person name="Iandolo J.J."/>
        </authorList>
    </citation>
    <scope>NUCLEOTIDE SEQUENCE [LARGE SCALE GENOMIC DNA]</scope>
    <source>
        <strain>NCTC 8325 / PS 47</strain>
    </source>
</reference>
<name>LEUC_STAA8</name>
<organism>
    <name type="scientific">Staphylococcus aureus (strain NCTC 8325 / PS 47)</name>
    <dbReference type="NCBI Taxonomy" id="93061"/>
    <lineage>
        <taxon>Bacteria</taxon>
        <taxon>Bacillati</taxon>
        <taxon>Bacillota</taxon>
        <taxon>Bacilli</taxon>
        <taxon>Bacillales</taxon>
        <taxon>Staphylococcaceae</taxon>
        <taxon>Staphylococcus</taxon>
    </lineage>
</organism>
<dbReference type="EC" id="4.2.1.33" evidence="1"/>
<dbReference type="EMBL" id="CP000253">
    <property type="protein sequence ID" value="ABD31325.1"/>
    <property type="molecule type" value="Genomic_DNA"/>
</dbReference>
<dbReference type="RefSeq" id="WP_000531823.1">
    <property type="nucleotide sequence ID" value="NZ_LS483365.1"/>
</dbReference>
<dbReference type="RefSeq" id="YP_500769.1">
    <property type="nucleotide sequence ID" value="NC_007795.1"/>
</dbReference>
<dbReference type="SMR" id="Q2FWK1"/>
<dbReference type="STRING" id="93061.SAOUHSC_02287"/>
<dbReference type="PaxDb" id="1280-SAXN108_2304"/>
<dbReference type="GeneID" id="3919162"/>
<dbReference type="KEGG" id="sao:SAOUHSC_02287"/>
<dbReference type="PATRIC" id="fig|93061.5.peg.2077"/>
<dbReference type="eggNOG" id="COG0065">
    <property type="taxonomic scope" value="Bacteria"/>
</dbReference>
<dbReference type="HOGENOM" id="CLU_006714_3_4_9"/>
<dbReference type="OrthoDB" id="9802769at2"/>
<dbReference type="UniPathway" id="UPA00048">
    <property type="reaction ID" value="UER00071"/>
</dbReference>
<dbReference type="PRO" id="PR:Q2FWK1"/>
<dbReference type="Proteomes" id="UP000008816">
    <property type="component" value="Chromosome"/>
</dbReference>
<dbReference type="GO" id="GO:0003861">
    <property type="term" value="F:3-isopropylmalate dehydratase activity"/>
    <property type="evidence" value="ECO:0007669"/>
    <property type="project" value="UniProtKB-UniRule"/>
</dbReference>
<dbReference type="GO" id="GO:0051539">
    <property type="term" value="F:4 iron, 4 sulfur cluster binding"/>
    <property type="evidence" value="ECO:0007669"/>
    <property type="project" value="UniProtKB-KW"/>
</dbReference>
<dbReference type="GO" id="GO:0046872">
    <property type="term" value="F:metal ion binding"/>
    <property type="evidence" value="ECO:0007669"/>
    <property type="project" value="UniProtKB-KW"/>
</dbReference>
<dbReference type="GO" id="GO:0009098">
    <property type="term" value="P:L-leucine biosynthetic process"/>
    <property type="evidence" value="ECO:0007669"/>
    <property type="project" value="UniProtKB-UniRule"/>
</dbReference>
<dbReference type="CDD" id="cd01583">
    <property type="entry name" value="IPMI"/>
    <property type="match status" value="1"/>
</dbReference>
<dbReference type="Gene3D" id="3.30.499.10">
    <property type="entry name" value="Aconitase, domain 3"/>
    <property type="match status" value="2"/>
</dbReference>
<dbReference type="HAMAP" id="MF_01026">
    <property type="entry name" value="LeuC_type1"/>
    <property type="match status" value="1"/>
</dbReference>
<dbReference type="InterPro" id="IPR004430">
    <property type="entry name" value="3-IsopropMal_deHydase_lsu"/>
</dbReference>
<dbReference type="InterPro" id="IPR015931">
    <property type="entry name" value="Acnase/IPM_dHydase_lsu_aba_1/3"/>
</dbReference>
<dbReference type="InterPro" id="IPR001030">
    <property type="entry name" value="Acoase/IPM_deHydtase_lsu_aba"/>
</dbReference>
<dbReference type="InterPro" id="IPR018136">
    <property type="entry name" value="Aconitase_4Fe-4S_BS"/>
</dbReference>
<dbReference type="InterPro" id="IPR036008">
    <property type="entry name" value="Aconitase_4Fe-4S_dom"/>
</dbReference>
<dbReference type="InterPro" id="IPR050067">
    <property type="entry name" value="IPM_dehydratase_rel_enz"/>
</dbReference>
<dbReference type="InterPro" id="IPR033941">
    <property type="entry name" value="IPMI_cat"/>
</dbReference>
<dbReference type="NCBIfam" id="TIGR00170">
    <property type="entry name" value="leuC"/>
    <property type="match status" value="1"/>
</dbReference>
<dbReference type="NCBIfam" id="NF004016">
    <property type="entry name" value="PRK05478.1"/>
    <property type="match status" value="1"/>
</dbReference>
<dbReference type="NCBIfam" id="NF009116">
    <property type="entry name" value="PRK12466.1"/>
    <property type="match status" value="1"/>
</dbReference>
<dbReference type="PANTHER" id="PTHR43822:SF9">
    <property type="entry name" value="3-ISOPROPYLMALATE DEHYDRATASE"/>
    <property type="match status" value="1"/>
</dbReference>
<dbReference type="PANTHER" id="PTHR43822">
    <property type="entry name" value="HOMOACONITASE, MITOCHONDRIAL-RELATED"/>
    <property type="match status" value="1"/>
</dbReference>
<dbReference type="Pfam" id="PF00330">
    <property type="entry name" value="Aconitase"/>
    <property type="match status" value="1"/>
</dbReference>
<dbReference type="PRINTS" id="PR00415">
    <property type="entry name" value="ACONITASE"/>
</dbReference>
<dbReference type="SUPFAM" id="SSF53732">
    <property type="entry name" value="Aconitase iron-sulfur domain"/>
    <property type="match status" value="1"/>
</dbReference>
<dbReference type="PROSITE" id="PS00450">
    <property type="entry name" value="ACONITASE_1"/>
    <property type="match status" value="1"/>
</dbReference>
<dbReference type="PROSITE" id="PS01244">
    <property type="entry name" value="ACONITASE_2"/>
    <property type="match status" value="1"/>
</dbReference>
<accession>Q2FWK1</accession>
<keyword id="KW-0004">4Fe-4S</keyword>
<keyword id="KW-0028">Amino-acid biosynthesis</keyword>
<keyword id="KW-0100">Branched-chain amino acid biosynthesis</keyword>
<keyword id="KW-0408">Iron</keyword>
<keyword id="KW-0411">Iron-sulfur</keyword>
<keyword id="KW-0432">Leucine biosynthesis</keyword>
<keyword id="KW-0456">Lyase</keyword>
<keyword id="KW-0479">Metal-binding</keyword>
<keyword id="KW-1185">Reference proteome</keyword>